<gene>
    <name evidence="1" type="primary">coaA</name>
    <name type="ordered locus">Arad_0052</name>
</gene>
<name>COAA_RHIR8</name>
<proteinExistence type="inferred from homology"/>
<reference key="1">
    <citation type="journal article" date="2009" name="J. Bacteriol.">
        <title>Genome sequences of three Agrobacterium biovars help elucidate the evolution of multichromosome genomes in bacteria.</title>
        <authorList>
            <person name="Slater S.C."/>
            <person name="Goldman B.S."/>
            <person name="Goodner B."/>
            <person name="Setubal J.C."/>
            <person name="Farrand S.K."/>
            <person name="Nester E.W."/>
            <person name="Burr T.J."/>
            <person name="Banta L."/>
            <person name="Dickerman A.W."/>
            <person name="Paulsen I."/>
            <person name="Otten L."/>
            <person name="Suen G."/>
            <person name="Welch R."/>
            <person name="Almeida N.F."/>
            <person name="Arnold F."/>
            <person name="Burton O.T."/>
            <person name="Du Z."/>
            <person name="Ewing A."/>
            <person name="Godsy E."/>
            <person name="Heisel S."/>
            <person name="Houmiel K.L."/>
            <person name="Jhaveri J."/>
            <person name="Lu J."/>
            <person name="Miller N.M."/>
            <person name="Norton S."/>
            <person name="Chen Q."/>
            <person name="Phoolcharoen W."/>
            <person name="Ohlin V."/>
            <person name="Ondrusek D."/>
            <person name="Pride N."/>
            <person name="Stricklin S.L."/>
            <person name="Sun J."/>
            <person name="Wheeler C."/>
            <person name="Wilson L."/>
            <person name="Zhu H."/>
            <person name="Wood D.W."/>
        </authorList>
    </citation>
    <scope>NUCLEOTIDE SEQUENCE [LARGE SCALE GENOMIC DNA]</scope>
    <source>
        <strain>K84 / ATCC BAA-868</strain>
    </source>
</reference>
<feature type="chain" id="PRO_1000124792" description="Pantothenate kinase">
    <location>
        <begin position="1"/>
        <end position="331"/>
    </location>
</feature>
<feature type="binding site" evidence="1">
    <location>
        <begin position="109"/>
        <end position="116"/>
    </location>
    <ligand>
        <name>ATP</name>
        <dbReference type="ChEBI" id="CHEBI:30616"/>
    </ligand>
</feature>
<sequence>MTIATKTPTTPETLDIFQAKAYSPYYFFSTEEWAKFRADTPLTLTADEVTRLRSMGDPIDLDEVRRIYLSLSRLLSSHVESSQILFEQRNRFLSLNGVAKTPFVIGIAGSVAVGKSTTARILKELLRRWPSSPKVDLITTDGFLYPNAELQRRNLMQRKGFPESYDTAALLRFLSAIKAGQPDVKAPCYSHLVYDVLPSEYKTVDRPDILIFEGINVLQSRHLPADGKIVPMVSDFFDFSIYIDADEDLIHNWYVTRFMRLRETAFRDPHSFFHRYASITEEEALGIAEGLWKNINLKNLRQNILPTRPRADLILRKGKNHLIEQVALRKL</sequence>
<accession>B9JG63</accession>
<protein>
    <recommendedName>
        <fullName evidence="1">Pantothenate kinase</fullName>
        <ecNumber evidence="1">2.7.1.33</ecNumber>
    </recommendedName>
    <alternativeName>
        <fullName evidence="1">Pantothenic acid kinase</fullName>
    </alternativeName>
</protein>
<organism>
    <name type="scientific">Rhizobium rhizogenes (strain K84 / ATCC BAA-868)</name>
    <name type="common">Agrobacterium radiobacter</name>
    <dbReference type="NCBI Taxonomy" id="311403"/>
    <lineage>
        <taxon>Bacteria</taxon>
        <taxon>Pseudomonadati</taxon>
        <taxon>Pseudomonadota</taxon>
        <taxon>Alphaproteobacteria</taxon>
        <taxon>Hyphomicrobiales</taxon>
        <taxon>Rhizobiaceae</taxon>
        <taxon>Rhizobium/Agrobacterium group</taxon>
        <taxon>Rhizobium</taxon>
    </lineage>
</organism>
<keyword id="KW-0067">ATP-binding</keyword>
<keyword id="KW-0173">Coenzyme A biosynthesis</keyword>
<keyword id="KW-0963">Cytoplasm</keyword>
<keyword id="KW-0418">Kinase</keyword>
<keyword id="KW-0547">Nucleotide-binding</keyword>
<keyword id="KW-0808">Transferase</keyword>
<comment type="catalytic activity">
    <reaction evidence="1">
        <text>(R)-pantothenate + ATP = (R)-4'-phosphopantothenate + ADP + H(+)</text>
        <dbReference type="Rhea" id="RHEA:16373"/>
        <dbReference type="ChEBI" id="CHEBI:10986"/>
        <dbReference type="ChEBI" id="CHEBI:15378"/>
        <dbReference type="ChEBI" id="CHEBI:29032"/>
        <dbReference type="ChEBI" id="CHEBI:30616"/>
        <dbReference type="ChEBI" id="CHEBI:456216"/>
        <dbReference type="EC" id="2.7.1.33"/>
    </reaction>
</comment>
<comment type="pathway">
    <text evidence="1">Cofactor biosynthesis; coenzyme A biosynthesis; CoA from (R)-pantothenate: step 1/5.</text>
</comment>
<comment type="subcellular location">
    <subcellularLocation>
        <location evidence="1">Cytoplasm</location>
    </subcellularLocation>
</comment>
<comment type="similarity">
    <text evidence="1">Belongs to the prokaryotic pantothenate kinase family.</text>
</comment>
<dbReference type="EC" id="2.7.1.33" evidence="1"/>
<dbReference type="EMBL" id="CP000628">
    <property type="protein sequence ID" value="ACM24846.1"/>
    <property type="molecule type" value="Genomic_DNA"/>
</dbReference>
<dbReference type="RefSeq" id="WP_007698560.1">
    <property type="nucleotide sequence ID" value="NC_011985.1"/>
</dbReference>
<dbReference type="SMR" id="B9JG63"/>
<dbReference type="STRING" id="311403.Arad_0052"/>
<dbReference type="GeneID" id="86850449"/>
<dbReference type="KEGG" id="ara:Arad_0052"/>
<dbReference type="eggNOG" id="COG1072">
    <property type="taxonomic scope" value="Bacteria"/>
</dbReference>
<dbReference type="HOGENOM" id="CLU_053818_1_1_5"/>
<dbReference type="UniPathway" id="UPA00241">
    <property type="reaction ID" value="UER00352"/>
</dbReference>
<dbReference type="Proteomes" id="UP000001600">
    <property type="component" value="Chromosome 1"/>
</dbReference>
<dbReference type="GO" id="GO:0005737">
    <property type="term" value="C:cytoplasm"/>
    <property type="evidence" value="ECO:0007669"/>
    <property type="project" value="UniProtKB-SubCell"/>
</dbReference>
<dbReference type="GO" id="GO:0005524">
    <property type="term" value="F:ATP binding"/>
    <property type="evidence" value="ECO:0007669"/>
    <property type="project" value="UniProtKB-UniRule"/>
</dbReference>
<dbReference type="GO" id="GO:0004594">
    <property type="term" value="F:pantothenate kinase activity"/>
    <property type="evidence" value="ECO:0007669"/>
    <property type="project" value="UniProtKB-UniRule"/>
</dbReference>
<dbReference type="GO" id="GO:0015937">
    <property type="term" value="P:coenzyme A biosynthetic process"/>
    <property type="evidence" value="ECO:0007669"/>
    <property type="project" value="UniProtKB-UniRule"/>
</dbReference>
<dbReference type="CDD" id="cd02025">
    <property type="entry name" value="PanK"/>
    <property type="match status" value="1"/>
</dbReference>
<dbReference type="Gene3D" id="3.40.50.300">
    <property type="entry name" value="P-loop containing nucleotide triphosphate hydrolases"/>
    <property type="match status" value="1"/>
</dbReference>
<dbReference type="HAMAP" id="MF_00215">
    <property type="entry name" value="Pantothen_kinase_1"/>
    <property type="match status" value="1"/>
</dbReference>
<dbReference type="InterPro" id="IPR027417">
    <property type="entry name" value="P-loop_NTPase"/>
</dbReference>
<dbReference type="InterPro" id="IPR004566">
    <property type="entry name" value="PanK"/>
</dbReference>
<dbReference type="InterPro" id="IPR006083">
    <property type="entry name" value="PRK/URK"/>
</dbReference>
<dbReference type="NCBIfam" id="TIGR00554">
    <property type="entry name" value="panK_bact"/>
    <property type="match status" value="1"/>
</dbReference>
<dbReference type="PANTHER" id="PTHR10285">
    <property type="entry name" value="URIDINE KINASE"/>
    <property type="match status" value="1"/>
</dbReference>
<dbReference type="Pfam" id="PF00485">
    <property type="entry name" value="PRK"/>
    <property type="match status" value="1"/>
</dbReference>
<dbReference type="PIRSF" id="PIRSF000545">
    <property type="entry name" value="Pantothenate_kin"/>
    <property type="match status" value="1"/>
</dbReference>
<dbReference type="SUPFAM" id="SSF52540">
    <property type="entry name" value="P-loop containing nucleoside triphosphate hydrolases"/>
    <property type="match status" value="1"/>
</dbReference>
<evidence type="ECO:0000255" key="1">
    <source>
        <dbReference type="HAMAP-Rule" id="MF_00215"/>
    </source>
</evidence>